<reference key="1">
    <citation type="submission" date="2008-04" db="EMBL/GenBank/DDBJ databases">
        <title>Complete sequence of chromosome of Exiguobacterium sibiricum 255-15.</title>
        <authorList>
            <consortium name="US DOE Joint Genome Institute"/>
            <person name="Copeland A."/>
            <person name="Lucas S."/>
            <person name="Lapidus A."/>
            <person name="Glavina del Rio T."/>
            <person name="Dalin E."/>
            <person name="Tice H."/>
            <person name="Bruce D."/>
            <person name="Goodwin L."/>
            <person name="Pitluck S."/>
            <person name="Kiss H."/>
            <person name="Chertkov O."/>
            <person name="Monk C."/>
            <person name="Brettin T."/>
            <person name="Detter J.C."/>
            <person name="Han C."/>
            <person name="Kuske C.R."/>
            <person name="Schmutz J."/>
            <person name="Larimer F."/>
            <person name="Land M."/>
            <person name="Hauser L."/>
            <person name="Kyrpides N."/>
            <person name="Mikhailova N."/>
            <person name="Vishnivetskaya T."/>
            <person name="Rodrigues D.F."/>
            <person name="Gilichinsky D."/>
            <person name="Tiedje J."/>
            <person name="Richardson P."/>
        </authorList>
    </citation>
    <scope>NUCLEOTIDE SEQUENCE [LARGE SCALE GENOMIC DNA]</scope>
    <source>
        <strain>DSM 17290 / CCUG 55495 / CIP 109462 / JCM 13490 / 255-15</strain>
    </source>
</reference>
<protein>
    <recommendedName>
        <fullName evidence="1">Transcriptional repressor NrdR</fullName>
    </recommendedName>
</protein>
<proteinExistence type="inferred from homology"/>
<organism>
    <name type="scientific">Exiguobacterium sibiricum (strain DSM 17290 / CCUG 55495 / CIP 109462 / JCM 13490 / 255-15)</name>
    <dbReference type="NCBI Taxonomy" id="262543"/>
    <lineage>
        <taxon>Bacteria</taxon>
        <taxon>Bacillati</taxon>
        <taxon>Bacillota</taxon>
        <taxon>Bacilli</taxon>
        <taxon>Bacillales</taxon>
        <taxon>Bacillales Family XII. Incertae Sedis</taxon>
        <taxon>Exiguobacterium</taxon>
    </lineage>
</organism>
<name>NRDR_EXIS2</name>
<accession>B1YK95</accession>
<feature type="chain" id="PRO_1000124508" description="Transcriptional repressor NrdR">
    <location>
        <begin position="1"/>
        <end position="160"/>
    </location>
</feature>
<feature type="domain" description="ATP-cone" evidence="1">
    <location>
        <begin position="49"/>
        <end position="139"/>
    </location>
</feature>
<feature type="zinc finger region" evidence="1">
    <location>
        <begin position="3"/>
        <end position="34"/>
    </location>
</feature>
<keyword id="KW-0067">ATP-binding</keyword>
<keyword id="KW-0238">DNA-binding</keyword>
<keyword id="KW-0479">Metal-binding</keyword>
<keyword id="KW-0547">Nucleotide-binding</keyword>
<keyword id="KW-1185">Reference proteome</keyword>
<keyword id="KW-0678">Repressor</keyword>
<keyword id="KW-0804">Transcription</keyword>
<keyword id="KW-0805">Transcription regulation</keyword>
<keyword id="KW-0862">Zinc</keyword>
<keyword id="KW-0863">Zinc-finger</keyword>
<sequence>MRCPACNYNGTKVLDSRPVQDFGSIRRRRECESCGYRFTTFEMVEQTPLIIVKKDGTRDEFNRDKILRGLVRACEKRPISIEQLETVVSRVEKTLRATAQHEIPSEQVGRLVLNELASVDEVAYVRFASVYKQFKDINVFFQELSELMERHQDTEQENQT</sequence>
<evidence type="ECO:0000255" key="1">
    <source>
        <dbReference type="HAMAP-Rule" id="MF_00440"/>
    </source>
</evidence>
<gene>
    <name evidence="1" type="primary">nrdR</name>
    <name type="ordered locus">Exig_2196</name>
</gene>
<comment type="function">
    <text evidence="1">Negatively regulates transcription of bacterial ribonucleotide reductase nrd genes and operons by binding to NrdR-boxes.</text>
</comment>
<comment type="cofactor">
    <cofactor evidence="1">
        <name>Zn(2+)</name>
        <dbReference type="ChEBI" id="CHEBI:29105"/>
    </cofactor>
    <text evidence="1">Binds 1 zinc ion.</text>
</comment>
<comment type="similarity">
    <text evidence="1">Belongs to the NrdR family.</text>
</comment>
<dbReference type="EMBL" id="CP001022">
    <property type="protein sequence ID" value="ACB61648.1"/>
    <property type="molecule type" value="Genomic_DNA"/>
</dbReference>
<dbReference type="RefSeq" id="WP_012371065.1">
    <property type="nucleotide sequence ID" value="NC_010556.1"/>
</dbReference>
<dbReference type="SMR" id="B1YK95"/>
<dbReference type="STRING" id="262543.Exig_2196"/>
<dbReference type="KEGG" id="esi:Exig_2196"/>
<dbReference type="eggNOG" id="COG1327">
    <property type="taxonomic scope" value="Bacteria"/>
</dbReference>
<dbReference type="HOGENOM" id="CLU_108412_0_0_9"/>
<dbReference type="OrthoDB" id="9807461at2"/>
<dbReference type="Proteomes" id="UP000001681">
    <property type="component" value="Chromosome"/>
</dbReference>
<dbReference type="GO" id="GO:0005524">
    <property type="term" value="F:ATP binding"/>
    <property type="evidence" value="ECO:0007669"/>
    <property type="project" value="UniProtKB-KW"/>
</dbReference>
<dbReference type="GO" id="GO:0003677">
    <property type="term" value="F:DNA binding"/>
    <property type="evidence" value="ECO:0007669"/>
    <property type="project" value="UniProtKB-KW"/>
</dbReference>
<dbReference type="GO" id="GO:0008270">
    <property type="term" value="F:zinc ion binding"/>
    <property type="evidence" value="ECO:0007669"/>
    <property type="project" value="UniProtKB-UniRule"/>
</dbReference>
<dbReference type="GO" id="GO:0045892">
    <property type="term" value="P:negative regulation of DNA-templated transcription"/>
    <property type="evidence" value="ECO:0007669"/>
    <property type="project" value="UniProtKB-UniRule"/>
</dbReference>
<dbReference type="HAMAP" id="MF_00440">
    <property type="entry name" value="NrdR"/>
    <property type="match status" value="1"/>
</dbReference>
<dbReference type="InterPro" id="IPR005144">
    <property type="entry name" value="ATP-cone_dom"/>
</dbReference>
<dbReference type="InterPro" id="IPR055173">
    <property type="entry name" value="NrdR-like_N"/>
</dbReference>
<dbReference type="InterPro" id="IPR003796">
    <property type="entry name" value="RNR_NrdR-like"/>
</dbReference>
<dbReference type="NCBIfam" id="TIGR00244">
    <property type="entry name" value="transcriptional regulator NrdR"/>
    <property type="match status" value="1"/>
</dbReference>
<dbReference type="PANTHER" id="PTHR30455">
    <property type="entry name" value="TRANSCRIPTIONAL REPRESSOR NRDR"/>
    <property type="match status" value="1"/>
</dbReference>
<dbReference type="PANTHER" id="PTHR30455:SF2">
    <property type="entry name" value="TRANSCRIPTIONAL REPRESSOR NRDR"/>
    <property type="match status" value="1"/>
</dbReference>
<dbReference type="Pfam" id="PF03477">
    <property type="entry name" value="ATP-cone"/>
    <property type="match status" value="1"/>
</dbReference>
<dbReference type="Pfam" id="PF22811">
    <property type="entry name" value="Zn_ribbon_NrdR"/>
    <property type="match status" value="1"/>
</dbReference>
<dbReference type="PROSITE" id="PS51161">
    <property type="entry name" value="ATP_CONE"/>
    <property type="match status" value="1"/>
</dbReference>